<organism>
    <name type="scientific">Staphylococcus aureus (strain MRSA252)</name>
    <dbReference type="NCBI Taxonomy" id="282458"/>
    <lineage>
        <taxon>Bacteria</taxon>
        <taxon>Bacillati</taxon>
        <taxon>Bacillota</taxon>
        <taxon>Bacilli</taxon>
        <taxon>Bacillales</taxon>
        <taxon>Staphylococcaceae</taxon>
        <taxon>Staphylococcus</taxon>
    </lineage>
</organism>
<gene>
    <name evidence="1" type="primary">mtnN</name>
    <name type="ordered locus">SAR1676</name>
</gene>
<dbReference type="EC" id="3.2.2.9" evidence="1"/>
<dbReference type="EMBL" id="BX571856">
    <property type="protein sequence ID" value="CAG40670.1"/>
    <property type="molecule type" value="Genomic_DNA"/>
</dbReference>
<dbReference type="RefSeq" id="WP_000579273.1">
    <property type="nucleotide sequence ID" value="NC_002952.2"/>
</dbReference>
<dbReference type="SMR" id="Q6GGA2"/>
<dbReference type="KEGG" id="sar:SAR1676"/>
<dbReference type="HOGENOM" id="CLU_031248_2_2_9"/>
<dbReference type="UniPathway" id="UPA00904">
    <property type="reaction ID" value="UER00871"/>
</dbReference>
<dbReference type="Proteomes" id="UP000000596">
    <property type="component" value="Chromosome"/>
</dbReference>
<dbReference type="GO" id="GO:0005829">
    <property type="term" value="C:cytosol"/>
    <property type="evidence" value="ECO:0007669"/>
    <property type="project" value="TreeGrafter"/>
</dbReference>
<dbReference type="GO" id="GO:0008782">
    <property type="term" value="F:adenosylhomocysteine nucleosidase activity"/>
    <property type="evidence" value="ECO:0007669"/>
    <property type="project" value="UniProtKB-UniRule"/>
</dbReference>
<dbReference type="GO" id="GO:0008930">
    <property type="term" value="F:methylthioadenosine nucleosidase activity"/>
    <property type="evidence" value="ECO:0007669"/>
    <property type="project" value="UniProtKB-UniRule"/>
</dbReference>
<dbReference type="GO" id="GO:0019509">
    <property type="term" value="P:L-methionine salvage from methylthioadenosine"/>
    <property type="evidence" value="ECO:0007669"/>
    <property type="project" value="UniProtKB-UniRule"/>
</dbReference>
<dbReference type="GO" id="GO:0019284">
    <property type="term" value="P:L-methionine salvage from S-adenosylmethionine"/>
    <property type="evidence" value="ECO:0007669"/>
    <property type="project" value="TreeGrafter"/>
</dbReference>
<dbReference type="GO" id="GO:0009164">
    <property type="term" value="P:nucleoside catabolic process"/>
    <property type="evidence" value="ECO:0007669"/>
    <property type="project" value="InterPro"/>
</dbReference>
<dbReference type="CDD" id="cd09008">
    <property type="entry name" value="MTAN"/>
    <property type="match status" value="1"/>
</dbReference>
<dbReference type="FunFam" id="3.40.50.1580:FF:000001">
    <property type="entry name" value="MTA/SAH nucleosidase family protein"/>
    <property type="match status" value="1"/>
</dbReference>
<dbReference type="Gene3D" id="3.40.50.1580">
    <property type="entry name" value="Nucleoside phosphorylase domain"/>
    <property type="match status" value="1"/>
</dbReference>
<dbReference type="HAMAP" id="MF_01684">
    <property type="entry name" value="Salvage_MtnN"/>
    <property type="match status" value="1"/>
</dbReference>
<dbReference type="InterPro" id="IPR010049">
    <property type="entry name" value="MTA_SAH_Nsdase"/>
</dbReference>
<dbReference type="InterPro" id="IPR000845">
    <property type="entry name" value="Nucleoside_phosphorylase_d"/>
</dbReference>
<dbReference type="InterPro" id="IPR035994">
    <property type="entry name" value="Nucleoside_phosphorylase_sf"/>
</dbReference>
<dbReference type="NCBIfam" id="TIGR01704">
    <property type="entry name" value="MTA_SAH-Nsdase"/>
    <property type="match status" value="1"/>
</dbReference>
<dbReference type="NCBIfam" id="NF004079">
    <property type="entry name" value="PRK05584.1"/>
    <property type="match status" value="1"/>
</dbReference>
<dbReference type="PANTHER" id="PTHR46832">
    <property type="entry name" value="5'-METHYLTHIOADENOSINE/S-ADENOSYLHOMOCYSTEINE NUCLEOSIDASE"/>
    <property type="match status" value="1"/>
</dbReference>
<dbReference type="PANTHER" id="PTHR46832:SF1">
    <property type="entry name" value="5'-METHYLTHIOADENOSINE_S-ADENOSYLHOMOCYSTEINE NUCLEOSIDASE"/>
    <property type="match status" value="1"/>
</dbReference>
<dbReference type="Pfam" id="PF01048">
    <property type="entry name" value="PNP_UDP_1"/>
    <property type="match status" value="1"/>
</dbReference>
<dbReference type="SUPFAM" id="SSF53167">
    <property type="entry name" value="Purine and uridine phosphorylases"/>
    <property type="match status" value="1"/>
</dbReference>
<sequence length="228" mass="24534">MIGIIGAMEEEVTILKNKLTQLSEISVAHVKFYTGILKDREVVITQSGIGKVNAAISTTLLINKFKPDIIINTGSAGALDESLNVGDVLISDDVKYHDADATAFGYEYGQVPQMPVAFQSSKPLIEKVSQVVQQQQLTAKVGLIVSGDSFIGSVEQRQKIKKAFPNAMAVEMEATAIAQTCYQFNVPFVVVRAVSDLANGEAEMSFEAFLEKAAVSSSQTVEALVSQL</sequence>
<accession>Q6GGA2</accession>
<evidence type="ECO:0000255" key="1">
    <source>
        <dbReference type="HAMAP-Rule" id="MF_01684"/>
    </source>
</evidence>
<proteinExistence type="inferred from homology"/>
<name>MTNN_STAAR</name>
<keyword id="KW-0028">Amino-acid biosynthesis</keyword>
<keyword id="KW-0378">Hydrolase</keyword>
<keyword id="KW-0486">Methionine biosynthesis</keyword>
<protein>
    <recommendedName>
        <fullName evidence="1">5'-methylthioadenosine/S-adenosylhomocysteine nucleosidase</fullName>
        <shortName evidence="1">MTA/SAH nucleosidase</shortName>
        <shortName evidence="1">MTAN</shortName>
        <ecNumber evidence="1">3.2.2.9</ecNumber>
    </recommendedName>
    <alternativeName>
        <fullName evidence="1">5'-deoxyadenosine nucleosidase</fullName>
        <shortName evidence="1">DOA nucleosidase</shortName>
        <shortName evidence="1">dAdo nucleosidase</shortName>
    </alternativeName>
    <alternativeName>
        <fullName evidence="1">5'-methylthioadenosine nucleosidase</fullName>
        <shortName evidence="1">MTA nucleosidase</shortName>
    </alternativeName>
    <alternativeName>
        <fullName evidence="1">S-adenosylhomocysteine nucleosidase</fullName>
        <shortName evidence="1">AdoHcy nucleosidase</shortName>
        <shortName evidence="1">SAH nucleosidase</shortName>
        <shortName evidence="1">SRH nucleosidase</shortName>
    </alternativeName>
</protein>
<comment type="function">
    <text evidence="1">Catalyzes the irreversible cleavage of the glycosidic bond in both 5'-methylthioadenosine (MTA) and S-adenosylhomocysteine (SAH/AdoHcy) to adenine and the corresponding thioribose, 5'-methylthioribose and S-ribosylhomocysteine, respectively. Also cleaves 5'-deoxyadenosine, a toxic by-product of radical S-adenosylmethionine (SAM) enzymes, into 5-deoxyribose and adenine.</text>
</comment>
<comment type="catalytic activity">
    <reaction evidence="1">
        <text>S-adenosyl-L-homocysteine + H2O = S-(5-deoxy-D-ribos-5-yl)-L-homocysteine + adenine</text>
        <dbReference type="Rhea" id="RHEA:17805"/>
        <dbReference type="ChEBI" id="CHEBI:15377"/>
        <dbReference type="ChEBI" id="CHEBI:16708"/>
        <dbReference type="ChEBI" id="CHEBI:57856"/>
        <dbReference type="ChEBI" id="CHEBI:58195"/>
        <dbReference type="EC" id="3.2.2.9"/>
    </reaction>
</comment>
<comment type="catalytic activity">
    <reaction evidence="1">
        <text>S-methyl-5'-thioadenosine + H2O = 5-(methylsulfanyl)-D-ribose + adenine</text>
        <dbReference type="Rhea" id="RHEA:13617"/>
        <dbReference type="ChEBI" id="CHEBI:15377"/>
        <dbReference type="ChEBI" id="CHEBI:16708"/>
        <dbReference type="ChEBI" id="CHEBI:17509"/>
        <dbReference type="ChEBI" id="CHEBI:78440"/>
        <dbReference type="EC" id="3.2.2.9"/>
    </reaction>
</comment>
<comment type="catalytic activity">
    <reaction evidence="1">
        <text>5'-deoxyadenosine + H2O = 5-deoxy-D-ribose + adenine</text>
        <dbReference type="Rhea" id="RHEA:29859"/>
        <dbReference type="ChEBI" id="CHEBI:15377"/>
        <dbReference type="ChEBI" id="CHEBI:16708"/>
        <dbReference type="ChEBI" id="CHEBI:17319"/>
        <dbReference type="ChEBI" id="CHEBI:149540"/>
        <dbReference type="EC" id="3.2.2.9"/>
    </reaction>
    <physiologicalReaction direction="left-to-right" evidence="1">
        <dbReference type="Rhea" id="RHEA:29860"/>
    </physiologicalReaction>
</comment>
<comment type="pathway">
    <text evidence="1">Amino-acid biosynthesis; L-methionine biosynthesis via salvage pathway; S-methyl-5-thio-alpha-D-ribose 1-phosphate from S-methyl-5'-thioadenosine (hydrolase route): step 1/2.</text>
</comment>
<comment type="similarity">
    <text evidence="1">Belongs to the PNP/UDP phosphorylase family. MtnN subfamily.</text>
</comment>
<reference key="1">
    <citation type="journal article" date="2004" name="Proc. Natl. Acad. Sci. U.S.A.">
        <title>Complete genomes of two clinical Staphylococcus aureus strains: evidence for the rapid evolution of virulence and drug resistance.</title>
        <authorList>
            <person name="Holden M.T.G."/>
            <person name="Feil E.J."/>
            <person name="Lindsay J.A."/>
            <person name="Peacock S.J."/>
            <person name="Day N.P.J."/>
            <person name="Enright M.C."/>
            <person name="Foster T.J."/>
            <person name="Moore C.E."/>
            <person name="Hurst L."/>
            <person name="Atkin R."/>
            <person name="Barron A."/>
            <person name="Bason N."/>
            <person name="Bentley S.D."/>
            <person name="Chillingworth C."/>
            <person name="Chillingworth T."/>
            <person name="Churcher C."/>
            <person name="Clark L."/>
            <person name="Corton C."/>
            <person name="Cronin A."/>
            <person name="Doggett J."/>
            <person name="Dowd L."/>
            <person name="Feltwell T."/>
            <person name="Hance Z."/>
            <person name="Harris B."/>
            <person name="Hauser H."/>
            <person name="Holroyd S."/>
            <person name="Jagels K."/>
            <person name="James K.D."/>
            <person name="Lennard N."/>
            <person name="Line A."/>
            <person name="Mayes R."/>
            <person name="Moule S."/>
            <person name="Mungall K."/>
            <person name="Ormond D."/>
            <person name="Quail M.A."/>
            <person name="Rabbinowitsch E."/>
            <person name="Rutherford K.M."/>
            <person name="Sanders M."/>
            <person name="Sharp S."/>
            <person name="Simmonds M."/>
            <person name="Stevens K."/>
            <person name="Whitehead S."/>
            <person name="Barrell B.G."/>
            <person name="Spratt B.G."/>
            <person name="Parkhill J."/>
        </authorList>
    </citation>
    <scope>NUCLEOTIDE SEQUENCE [LARGE SCALE GENOMIC DNA]</scope>
    <source>
        <strain>MRSA252</strain>
    </source>
</reference>
<feature type="chain" id="PRO_0000359366" description="5'-methylthioadenosine/S-adenosylhomocysteine nucleosidase">
    <location>
        <begin position="1"/>
        <end position="228"/>
    </location>
</feature>
<feature type="active site" description="Proton acceptor" evidence="1">
    <location>
        <position position="11"/>
    </location>
</feature>
<feature type="active site" description="Proton donor" evidence="1">
    <location>
        <position position="196"/>
    </location>
</feature>
<feature type="binding site" evidence="1">
    <location>
        <position position="77"/>
    </location>
    <ligand>
        <name>substrate</name>
    </ligand>
</feature>
<feature type="binding site" evidence="1">
    <location>
        <position position="151"/>
    </location>
    <ligand>
        <name>substrate</name>
    </ligand>
</feature>
<feature type="binding site" evidence="1">
    <location>
        <begin position="172"/>
        <end position="173"/>
    </location>
    <ligand>
        <name>substrate</name>
    </ligand>
</feature>